<reference key="1">
    <citation type="submission" date="2007-05" db="EMBL/GenBank/DDBJ databases">
        <title>Complete sequence of Geobacter uraniireducens Rf4.</title>
        <authorList>
            <consortium name="US DOE Joint Genome Institute"/>
            <person name="Copeland A."/>
            <person name="Lucas S."/>
            <person name="Lapidus A."/>
            <person name="Barry K."/>
            <person name="Detter J.C."/>
            <person name="Glavina del Rio T."/>
            <person name="Hammon N."/>
            <person name="Israni S."/>
            <person name="Dalin E."/>
            <person name="Tice H."/>
            <person name="Pitluck S."/>
            <person name="Chertkov O."/>
            <person name="Brettin T."/>
            <person name="Bruce D."/>
            <person name="Han C."/>
            <person name="Schmutz J."/>
            <person name="Larimer F."/>
            <person name="Land M."/>
            <person name="Hauser L."/>
            <person name="Kyrpides N."/>
            <person name="Mikhailova N."/>
            <person name="Shelobolina E."/>
            <person name="Aklujkar M."/>
            <person name="Lovley D."/>
            <person name="Richardson P."/>
        </authorList>
    </citation>
    <scope>NUCLEOTIDE SEQUENCE [LARGE SCALE GENOMIC DNA]</scope>
    <source>
        <strain>ATCC BAA-1134 / JCM 13001 / Rf4</strain>
    </source>
</reference>
<evidence type="ECO:0000255" key="1">
    <source>
        <dbReference type="HAMAP-Rule" id="MF_00107"/>
    </source>
</evidence>
<name>ISPF_GEOUR</name>
<organism>
    <name type="scientific">Geotalea uraniireducens (strain Rf4)</name>
    <name type="common">Geobacter uraniireducens</name>
    <dbReference type="NCBI Taxonomy" id="351605"/>
    <lineage>
        <taxon>Bacteria</taxon>
        <taxon>Pseudomonadati</taxon>
        <taxon>Thermodesulfobacteriota</taxon>
        <taxon>Desulfuromonadia</taxon>
        <taxon>Geobacterales</taxon>
        <taxon>Geobacteraceae</taxon>
        <taxon>Geotalea</taxon>
    </lineage>
</organism>
<accession>A5G939</accession>
<gene>
    <name evidence="1" type="primary">ispF</name>
    <name type="ordered locus">Gura_4164</name>
</gene>
<keyword id="KW-0414">Isoprene biosynthesis</keyword>
<keyword id="KW-0456">Lyase</keyword>
<keyword id="KW-0479">Metal-binding</keyword>
<keyword id="KW-1185">Reference proteome</keyword>
<dbReference type="EC" id="4.6.1.12" evidence="1"/>
<dbReference type="EMBL" id="CP000698">
    <property type="protein sequence ID" value="ABQ28307.1"/>
    <property type="molecule type" value="Genomic_DNA"/>
</dbReference>
<dbReference type="RefSeq" id="WP_011940938.1">
    <property type="nucleotide sequence ID" value="NC_009483.1"/>
</dbReference>
<dbReference type="SMR" id="A5G939"/>
<dbReference type="STRING" id="351605.Gura_4164"/>
<dbReference type="KEGG" id="gur:Gura_4164"/>
<dbReference type="HOGENOM" id="CLU_084630_2_0_7"/>
<dbReference type="OrthoDB" id="9804336at2"/>
<dbReference type="UniPathway" id="UPA00056">
    <property type="reaction ID" value="UER00095"/>
</dbReference>
<dbReference type="Proteomes" id="UP000006695">
    <property type="component" value="Chromosome"/>
</dbReference>
<dbReference type="GO" id="GO:0008685">
    <property type="term" value="F:2-C-methyl-D-erythritol 2,4-cyclodiphosphate synthase activity"/>
    <property type="evidence" value="ECO:0007669"/>
    <property type="project" value="UniProtKB-UniRule"/>
</dbReference>
<dbReference type="GO" id="GO:0046872">
    <property type="term" value="F:metal ion binding"/>
    <property type="evidence" value="ECO:0007669"/>
    <property type="project" value="UniProtKB-KW"/>
</dbReference>
<dbReference type="GO" id="GO:0019288">
    <property type="term" value="P:isopentenyl diphosphate biosynthetic process, methylerythritol 4-phosphate pathway"/>
    <property type="evidence" value="ECO:0007669"/>
    <property type="project" value="UniProtKB-UniRule"/>
</dbReference>
<dbReference type="GO" id="GO:0016114">
    <property type="term" value="P:terpenoid biosynthetic process"/>
    <property type="evidence" value="ECO:0007669"/>
    <property type="project" value="InterPro"/>
</dbReference>
<dbReference type="CDD" id="cd00554">
    <property type="entry name" value="MECDP_synthase"/>
    <property type="match status" value="1"/>
</dbReference>
<dbReference type="FunFam" id="3.30.1330.50:FF:000001">
    <property type="entry name" value="2-C-methyl-D-erythritol 2,4-cyclodiphosphate synthase"/>
    <property type="match status" value="1"/>
</dbReference>
<dbReference type="Gene3D" id="3.30.1330.50">
    <property type="entry name" value="2-C-methyl-D-erythritol 2,4-cyclodiphosphate synthase"/>
    <property type="match status" value="1"/>
</dbReference>
<dbReference type="HAMAP" id="MF_00107">
    <property type="entry name" value="IspF"/>
    <property type="match status" value="1"/>
</dbReference>
<dbReference type="InterPro" id="IPR003526">
    <property type="entry name" value="MECDP_synthase"/>
</dbReference>
<dbReference type="InterPro" id="IPR020555">
    <property type="entry name" value="MECDP_synthase_CS"/>
</dbReference>
<dbReference type="InterPro" id="IPR036571">
    <property type="entry name" value="MECDP_synthase_sf"/>
</dbReference>
<dbReference type="NCBIfam" id="TIGR00151">
    <property type="entry name" value="ispF"/>
    <property type="match status" value="1"/>
</dbReference>
<dbReference type="PANTHER" id="PTHR43181">
    <property type="entry name" value="2-C-METHYL-D-ERYTHRITOL 2,4-CYCLODIPHOSPHATE SYNTHASE, CHLOROPLASTIC"/>
    <property type="match status" value="1"/>
</dbReference>
<dbReference type="PANTHER" id="PTHR43181:SF1">
    <property type="entry name" value="2-C-METHYL-D-ERYTHRITOL 2,4-CYCLODIPHOSPHATE SYNTHASE, CHLOROPLASTIC"/>
    <property type="match status" value="1"/>
</dbReference>
<dbReference type="Pfam" id="PF02542">
    <property type="entry name" value="YgbB"/>
    <property type="match status" value="1"/>
</dbReference>
<dbReference type="SUPFAM" id="SSF69765">
    <property type="entry name" value="IpsF-like"/>
    <property type="match status" value="1"/>
</dbReference>
<dbReference type="PROSITE" id="PS01350">
    <property type="entry name" value="ISPF"/>
    <property type="match status" value="1"/>
</dbReference>
<feature type="chain" id="PRO_1000075913" description="2-C-methyl-D-erythritol 2,4-cyclodiphosphate synthase">
    <location>
        <begin position="1"/>
        <end position="157"/>
    </location>
</feature>
<feature type="binding site" evidence="1">
    <location>
        <begin position="8"/>
        <end position="10"/>
    </location>
    <ligand>
        <name>4-CDP-2-C-methyl-D-erythritol 2-phosphate</name>
        <dbReference type="ChEBI" id="CHEBI:57919"/>
    </ligand>
</feature>
<feature type="binding site" evidence="1">
    <location>
        <position position="8"/>
    </location>
    <ligand>
        <name>a divalent metal cation</name>
        <dbReference type="ChEBI" id="CHEBI:60240"/>
    </ligand>
</feature>
<feature type="binding site" evidence="1">
    <location>
        <position position="10"/>
    </location>
    <ligand>
        <name>a divalent metal cation</name>
        <dbReference type="ChEBI" id="CHEBI:60240"/>
    </ligand>
</feature>
<feature type="binding site" evidence="1">
    <location>
        <begin position="34"/>
        <end position="35"/>
    </location>
    <ligand>
        <name>4-CDP-2-C-methyl-D-erythritol 2-phosphate</name>
        <dbReference type="ChEBI" id="CHEBI:57919"/>
    </ligand>
</feature>
<feature type="binding site" evidence="1">
    <location>
        <position position="42"/>
    </location>
    <ligand>
        <name>a divalent metal cation</name>
        <dbReference type="ChEBI" id="CHEBI:60240"/>
    </ligand>
</feature>
<feature type="binding site" evidence="1">
    <location>
        <begin position="56"/>
        <end position="58"/>
    </location>
    <ligand>
        <name>4-CDP-2-C-methyl-D-erythritol 2-phosphate</name>
        <dbReference type="ChEBI" id="CHEBI:57919"/>
    </ligand>
</feature>
<feature type="binding site" evidence="1">
    <location>
        <begin position="61"/>
        <end position="65"/>
    </location>
    <ligand>
        <name>4-CDP-2-C-methyl-D-erythritol 2-phosphate</name>
        <dbReference type="ChEBI" id="CHEBI:57919"/>
    </ligand>
</feature>
<feature type="binding site" evidence="1">
    <location>
        <begin position="132"/>
        <end position="135"/>
    </location>
    <ligand>
        <name>4-CDP-2-C-methyl-D-erythritol 2-phosphate</name>
        <dbReference type="ChEBI" id="CHEBI:57919"/>
    </ligand>
</feature>
<feature type="binding site" evidence="1">
    <location>
        <position position="139"/>
    </location>
    <ligand>
        <name>4-CDP-2-C-methyl-D-erythritol 2-phosphate</name>
        <dbReference type="ChEBI" id="CHEBI:57919"/>
    </ligand>
</feature>
<feature type="binding site" evidence="1">
    <location>
        <position position="142"/>
    </location>
    <ligand>
        <name>4-CDP-2-C-methyl-D-erythritol 2-phosphate</name>
        <dbReference type="ChEBI" id="CHEBI:57919"/>
    </ligand>
</feature>
<feature type="site" description="Transition state stabilizer" evidence="1">
    <location>
        <position position="34"/>
    </location>
</feature>
<feature type="site" description="Transition state stabilizer" evidence="1">
    <location>
        <position position="133"/>
    </location>
</feature>
<protein>
    <recommendedName>
        <fullName evidence="1">2-C-methyl-D-erythritol 2,4-cyclodiphosphate synthase</fullName>
        <shortName evidence="1">MECDP-synthase</shortName>
        <shortName evidence="1">MECPP-synthase</shortName>
        <shortName evidence="1">MECPS</shortName>
        <ecNumber evidence="1">4.6.1.12</ecNumber>
    </recommendedName>
</protein>
<sequence>MRIGHGYDVHKLVENRKLILGGVDIPYERGLLGHSDADVLLHAISDAILGAIGEGDIGKHFPDTDPAYKGADSIKLLMHVMALAVGKGYAIGNLDATIVAQRPKLAPHIPQMRENIARALKADADRINVKATTTEELGFAGRGEGIAAYTVVLLERK</sequence>
<proteinExistence type="inferred from homology"/>
<comment type="function">
    <text evidence="1">Involved in the biosynthesis of isopentenyl diphosphate (IPP) and dimethylallyl diphosphate (DMAPP), two major building blocks of isoprenoid compounds. Catalyzes the conversion of 4-diphosphocytidyl-2-C-methyl-D-erythritol 2-phosphate (CDP-ME2P) to 2-C-methyl-D-erythritol 2,4-cyclodiphosphate (ME-CPP) with a corresponding release of cytidine 5-monophosphate (CMP).</text>
</comment>
<comment type="catalytic activity">
    <reaction evidence="1">
        <text>4-CDP-2-C-methyl-D-erythritol 2-phosphate = 2-C-methyl-D-erythritol 2,4-cyclic diphosphate + CMP</text>
        <dbReference type="Rhea" id="RHEA:23864"/>
        <dbReference type="ChEBI" id="CHEBI:57919"/>
        <dbReference type="ChEBI" id="CHEBI:58483"/>
        <dbReference type="ChEBI" id="CHEBI:60377"/>
        <dbReference type="EC" id="4.6.1.12"/>
    </reaction>
</comment>
<comment type="cofactor">
    <cofactor evidence="1">
        <name>a divalent metal cation</name>
        <dbReference type="ChEBI" id="CHEBI:60240"/>
    </cofactor>
    <text evidence="1">Binds 1 divalent metal cation per subunit.</text>
</comment>
<comment type="pathway">
    <text evidence="1">Isoprenoid biosynthesis; isopentenyl diphosphate biosynthesis via DXP pathway; isopentenyl diphosphate from 1-deoxy-D-xylulose 5-phosphate: step 4/6.</text>
</comment>
<comment type="subunit">
    <text evidence="1">Homotrimer.</text>
</comment>
<comment type="similarity">
    <text evidence="1">Belongs to the IspF family.</text>
</comment>